<gene>
    <name evidence="1" type="primary">alaS</name>
    <name type="ordered locus">SAS1554</name>
</gene>
<organism>
    <name type="scientific">Staphylococcus aureus (strain MSSA476)</name>
    <dbReference type="NCBI Taxonomy" id="282459"/>
    <lineage>
        <taxon>Bacteria</taxon>
        <taxon>Bacillati</taxon>
        <taxon>Bacillota</taxon>
        <taxon>Bacilli</taxon>
        <taxon>Bacillales</taxon>
        <taxon>Staphylococcaceae</taxon>
        <taxon>Staphylococcus</taxon>
    </lineage>
</organism>
<accession>Q6G8V1</accession>
<keyword id="KW-0030">Aminoacyl-tRNA synthetase</keyword>
<keyword id="KW-0067">ATP-binding</keyword>
<keyword id="KW-0963">Cytoplasm</keyword>
<keyword id="KW-0436">Ligase</keyword>
<keyword id="KW-0479">Metal-binding</keyword>
<keyword id="KW-0547">Nucleotide-binding</keyword>
<keyword id="KW-0648">Protein biosynthesis</keyword>
<keyword id="KW-0694">RNA-binding</keyword>
<keyword id="KW-0820">tRNA-binding</keyword>
<keyword id="KW-0862">Zinc</keyword>
<sequence>MKKLKASEIRQKYLDFFVEKGHMVEPSAPLVPIDDDTLLWINSGVATLKKYFDGRETPKKPRIVNSQKAIRTNDIENVGFTARHHTFFEMLGNFSIGDYFKQEAIEFAWEFLTSDKWMGMEPDKLYVTIHPEDMEAYNIWHKDIGLEESRIIRIEGNFWDIGEGPSGPNTEIFYDRGEAYGQDDPAEEMYPGGENERYLEVWNLVFSEFNHNKDHSYTPLPNKNIDTGMGLERMASVSQNVRTNYETDLFMPIMNEIEKVSGKQYLVNNEQDVAFKVIADHIRTIAFAISDGALPANEGRGYVLRRLLRRAVRFSQTLGINEPFMYKLVDIVADIMEPYYPNVKEKADFIKRVIKSEEERFHETLEDGLAILNELIKKAKATTNEINGKDAFKLYDTYGFPIELTEEIAVQAGLKVDMTTFESEMQQQRDRARQARQNSQSMQVQSEVLKNITSASTFVGYDTATAQTTLTHLIYNGEEVSQVEAGETVYFMLTETPFYAVSGGQVADTGIVYNDNFEIAVSEVTKAPNGQNLHKGVVQFGQVNVGATVSAEVNQNDRRDIQKNHSATHLLHAALKSVLGDHVNQAGSLVEADRLRFDFSHFGPMTNDEIDQVERLVNEEIWKGIDVNIQEMDIASAKEMGAMALFGEKYGDVVRVVNMAPFSIELCGGIHVRNTSEIGLFKIVSESGTGAGVRRIEALTGKAAFLYLEDIQEKFNTMKSQLKVKSDDQVVDKLTQLQDEEKALLKQLEQRDKEITSLKMGNIENQVEEINGYKVLVTEVDVPNAKAIRSTMDDFKSKLQDTIIILASNVDDKVSMVATVPKSLTNNVKAGDLIKQMAPIVGGKGGGRPDMAQGGGTQPENISKSLSFIKDYIKNL</sequence>
<feature type="chain" id="PRO_0000075203" description="Alanine--tRNA ligase">
    <location>
        <begin position="1"/>
        <end position="876"/>
    </location>
</feature>
<feature type="binding site" evidence="1">
    <location>
        <position position="565"/>
    </location>
    <ligand>
        <name>Zn(2+)</name>
        <dbReference type="ChEBI" id="CHEBI:29105"/>
    </ligand>
</feature>
<feature type="binding site" evidence="1">
    <location>
        <position position="569"/>
    </location>
    <ligand>
        <name>Zn(2+)</name>
        <dbReference type="ChEBI" id="CHEBI:29105"/>
    </ligand>
</feature>
<feature type="binding site" evidence="1">
    <location>
        <position position="667"/>
    </location>
    <ligand>
        <name>Zn(2+)</name>
        <dbReference type="ChEBI" id="CHEBI:29105"/>
    </ligand>
</feature>
<feature type="binding site" evidence="1">
    <location>
        <position position="671"/>
    </location>
    <ligand>
        <name>Zn(2+)</name>
        <dbReference type="ChEBI" id="CHEBI:29105"/>
    </ligand>
</feature>
<comment type="function">
    <text evidence="1">Catalyzes the attachment of alanine to tRNA(Ala) in a two-step reaction: alanine is first activated by ATP to form Ala-AMP and then transferred to the acceptor end of tRNA(Ala). Also edits incorrectly charged Ser-tRNA(Ala) and Gly-tRNA(Ala) via its editing domain.</text>
</comment>
<comment type="catalytic activity">
    <reaction evidence="1">
        <text>tRNA(Ala) + L-alanine + ATP = L-alanyl-tRNA(Ala) + AMP + diphosphate</text>
        <dbReference type="Rhea" id="RHEA:12540"/>
        <dbReference type="Rhea" id="RHEA-COMP:9657"/>
        <dbReference type="Rhea" id="RHEA-COMP:9923"/>
        <dbReference type="ChEBI" id="CHEBI:30616"/>
        <dbReference type="ChEBI" id="CHEBI:33019"/>
        <dbReference type="ChEBI" id="CHEBI:57972"/>
        <dbReference type="ChEBI" id="CHEBI:78442"/>
        <dbReference type="ChEBI" id="CHEBI:78497"/>
        <dbReference type="ChEBI" id="CHEBI:456215"/>
        <dbReference type="EC" id="6.1.1.7"/>
    </reaction>
</comment>
<comment type="cofactor">
    <cofactor evidence="1">
        <name>Zn(2+)</name>
        <dbReference type="ChEBI" id="CHEBI:29105"/>
    </cofactor>
    <text evidence="1">Binds 1 zinc ion per subunit.</text>
</comment>
<comment type="subcellular location">
    <subcellularLocation>
        <location evidence="1">Cytoplasm</location>
    </subcellularLocation>
</comment>
<comment type="domain">
    <text evidence="1">Consists of three domains; the N-terminal catalytic domain, the editing domain and the C-terminal C-Ala domain. The editing domain removes incorrectly charged amino acids, while the C-Ala domain, along with tRNA(Ala), serves as a bridge to cooperatively bring together the editing and aminoacylation centers thus stimulating deacylation of misacylated tRNAs.</text>
</comment>
<comment type="similarity">
    <text evidence="1">Belongs to the class-II aminoacyl-tRNA synthetase family.</text>
</comment>
<protein>
    <recommendedName>
        <fullName evidence="1">Alanine--tRNA ligase</fullName>
        <ecNumber evidence="1">6.1.1.7</ecNumber>
    </recommendedName>
    <alternativeName>
        <fullName evidence="1">Alanyl-tRNA synthetase</fullName>
        <shortName evidence="1">AlaRS</shortName>
    </alternativeName>
</protein>
<proteinExistence type="inferred from homology"/>
<dbReference type="EC" id="6.1.1.7" evidence="1"/>
<dbReference type="EMBL" id="BX571857">
    <property type="protein sequence ID" value="CAG43355.1"/>
    <property type="molecule type" value="Genomic_DNA"/>
</dbReference>
<dbReference type="RefSeq" id="WP_000734072.1">
    <property type="nucleotide sequence ID" value="NC_002953.3"/>
</dbReference>
<dbReference type="SMR" id="Q6G8V1"/>
<dbReference type="KEGG" id="sas:SAS1554"/>
<dbReference type="HOGENOM" id="CLU_004485_1_1_9"/>
<dbReference type="GO" id="GO:0005829">
    <property type="term" value="C:cytosol"/>
    <property type="evidence" value="ECO:0007669"/>
    <property type="project" value="TreeGrafter"/>
</dbReference>
<dbReference type="GO" id="GO:0004813">
    <property type="term" value="F:alanine-tRNA ligase activity"/>
    <property type="evidence" value="ECO:0007669"/>
    <property type="project" value="UniProtKB-UniRule"/>
</dbReference>
<dbReference type="GO" id="GO:0002161">
    <property type="term" value="F:aminoacyl-tRNA deacylase activity"/>
    <property type="evidence" value="ECO:0007669"/>
    <property type="project" value="TreeGrafter"/>
</dbReference>
<dbReference type="GO" id="GO:0005524">
    <property type="term" value="F:ATP binding"/>
    <property type="evidence" value="ECO:0007669"/>
    <property type="project" value="UniProtKB-UniRule"/>
</dbReference>
<dbReference type="GO" id="GO:0140096">
    <property type="term" value="F:catalytic activity, acting on a protein"/>
    <property type="evidence" value="ECO:0007669"/>
    <property type="project" value="UniProtKB-ARBA"/>
</dbReference>
<dbReference type="GO" id="GO:0016740">
    <property type="term" value="F:transferase activity"/>
    <property type="evidence" value="ECO:0007669"/>
    <property type="project" value="UniProtKB-ARBA"/>
</dbReference>
<dbReference type="GO" id="GO:0000049">
    <property type="term" value="F:tRNA binding"/>
    <property type="evidence" value="ECO:0007669"/>
    <property type="project" value="UniProtKB-KW"/>
</dbReference>
<dbReference type="GO" id="GO:0008270">
    <property type="term" value="F:zinc ion binding"/>
    <property type="evidence" value="ECO:0007669"/>
    <property type="project" value="UniProtKB-UniRule"/>
</dbReference>
<dbReference type="GO" id="GO:0006419">
    <property type="term" value="P:alanyl-tRNA aminoacylation"/>
    <property type="evidence" value="ECO:0007669"/>
    <property type="project" value="UniProtKB-UniRule"/>
</dbReference>
<dbReference type="CDD" id="cd00673">
    <property type="entry name" value="AlaRS_core"/>
    <property type="match status" value="1"/>
</dbReference>
<dbReference type="FunFam" id="2.40.30.130:FF:000001">
    <property type="entry name" value="Alanine--tRNA ligase"/>
    <property type="match status" value="1"/>
</dbReference>
<dbReference type="FunFam" id="3.10.310.40:FF:000001">
    <property type="entry name" value="Alanine--tRNA ligase"/>
    <property type="match status" value="1"/>
</dbReference>
<dbReference type="FunFam" id="3.30.54.20:FF:000001">
    <property type="entry name" value="Alanine--tRNA ligase"/>
    <property type="match status" value="1"/>
</dbReference>
<dbReference type="FunFam" id="3.30.930.10:FF:000046">
    <property type="entry name" value="Alanine--tRNA ligase"/>
    <property type="match status" value="1"/>
</dbReference>
<dbReference type="FunFam" id="3.30.980.10:FF:000004">
    <property type="entry name" value="Alanine--tRNA ligase, cytoplasmic"/>
    <property type="match status" value="1"/>
</dbReference>
<dbReference type="Gene3D" id="2.40.30.130">
    <property type="match status" value="1"/>
</dbReference>
<dbReference type="Gene3D" id="3.10.310.40">
    <property type="match status" value="1"/>
</dbReference>
<dbReference type="Gene3D" id="3.30.54.20">
    <property type="match status" value="1"/>
</dbReference>
<dbReference type="Gene3D" id="3.30.930.10">
    <property type="entry name" value="Bira Bifunctional Protein, Domain 2"/>
    <property type="match status" value="1"/>
</dbReference>
<dbReference type="Gene3D" id="3.30.980.10">
    <property type="entry name" value="Threonyl-trna Synthetase, Chain A, domain 2"/>
    <property type="match status" value="1"/>
</dbReference>
<dbReference type="HAMAP" id="MF_00036_B">
    <property type="entry name" value="Ala_tRNA_synth_B"/>
    <property type="match status" value="1"/>
</dbReference>
<dbReference type="InterPro" id="IPR045864">
    <property type="entry name" value="aa-tRNA-synth_II/BPL/LPL"/>
</dbReference>
<dbReference type="InterPro" id="IPR002318">
    <property type="entry name" value="Ala-tRNA-lgiase_IIc"/>
</dbReference>
<dbReference type="InterPro" id="IPR018162">
    <property type="entry name" value="Ala-tRNA-ligase_IIc_anticod-bd"/>
</dbReference>
<dbReference type="InterPro" id="IPR018165">
    <property type="entry name" value="Ala-tRNA-synth_IIc_core"/>
</dbReference>
<dbReference type="InterPro" id="IPR018164">
    <property type="entry name" value="Ala-tRNA-synth_IIc_N"/>
</dbReference>
<dbReference type="InterPro" id="IPR050058">
    <property type="entry name" value="Ala-tRNA_ligase"/>
</dbReference>
<dbReference type="InterPro" id="IPR023033">
    <property type="entry name" value="Ala_tRNA_ligase_euk/bac"/>
</dbReference>
<dbReference type="InterPro" id="IPR003156">
    <property type="entry name" value="DHHA1_dom"/>
</dbReference>
<dbReference type="InterPro" id="IPR018163">
    <property type="entry name" value="Thr/Ala-tRNA-synth_IIc_edit"/>
</dbReference>
<dbReference type="InterPro" id="IPR009000">
    <property type="entry name" value="Transl_B-barrel_sf"/>
</dbReference>
<dbReference type="InterPro" id="IPR012947">
    <property type="entry name" value="tRNA_SAD"/>
</dbReference>
<dbReference type="NCBIfam" id="TIGR00344">
    <property type="entry name" value="alaS"/>
    <property type="match status" value="1"/>
</dbReference>
<dbReference type="PANTHER" id="PTHR11777:SF9">
    <property type="entry name" value="ALANINE--TRNA LIGASE, CYTOPLASMIC"/>
    <property type="match status" value="1"/>
</dbReference>
<dbReference type="PANTHER" id="PTHR11777">
    <property type="entry name" value="ALANYL-TRNA SYNTHETASE"/>
    <property type="match status" value="1"/>
</dbReference>
<dbReference type="Pfam" id="PF02272">
    <property type="entry name" value="DHHA1"/>
    <property type="match status" value="1"/>
</dbReference>
<dbReference type="Pfam" id="PF01411">
    <property type="entry name" value="tRNA-synt_2c"/>
    <property type="match status" value="1"/>
</dbReference>
<dbReference type="Pfam" id="PF07973">
    <property type="entry name" value="tRNA_SAD"/>
    <property type="match status" value="1"/>
</dbReference>
<dbReference type="PRINTS" id="PR00980">
    <property type="entry name" value="TRNASYNTHALA"/>
</dbReference>
<dbReference type="SMART" id="SM00863">
    <property type="entry name" value="tRNA_SAD"/>
    <property type="match status" value="1"/>
</dbReference>
<dbReference type="SUPFAM" id="SSF55681">
    <property type="entry name" value="Class II aaRS and biotin synthetases"/>
    <property type="match status" value="1"/>
</dbReference>
<dbReference type="SUPFAM" id="SSF101353">
    <property type="entry name" value="Putative anticodon-binding domain of alanyl-tRNA synthetase (AlaRS)"/>
    <property type="match status" value="1"/>
</dbReference>
<dbReference type="SUPFAM" id="SSF55186">
    <property type="entry name" value="ThrRS/AlaRS common domain"/>
    <property type="match status" value="1"/>
</dbReference>
<dbReference type="SUPFAM" id="SSF50447">
    <property type="entry name" value="Translation proteins"/>
    <property type="match status" value="1"/>
</dbReference>
<dbReference type="PROSITE" id="PS50860">
    <property type="entry name" value="AA_TRNA_LIGASE_II_ALA"/>
    <property type="match status" value="1"/>
</dbReference>
<name>SYA_STAAS</name>
<reference key="1">
    <citation type="journal article" date="2004" name="Proc. Natl. Acad. Sci. U.S.A.">
        <title>Complete genomes of two clinical Staphylococcus aureus strains: evidence for the rapid evolution of virulence and drug resistance.</title>
        <authorList>
            <person name="Holden M.T.G."/>
            <person name="Feil E.J."/>
            <person name="Lindsay J.A."/>
            <person name="Peacock S.J."/>
            <person name="Day N.P.J."/>
            <person name="Enright M.C."/>
            <person name="Foster T.J."/>
            <person name="Moore C.E."/>
            <person name="Hurst L."/>
            <person name="Atkin R."/>
            <person name="Barron A."/>
            <person name="Bason N."/>
            <person name="Bentley S.D."/>
            <person name="Chillingworth C."/>
            <person name="Chillingworth T."/>
            <person name="Churcher C."/>
            <person name="Clark L."/>
            <person name="Corton C."/>
            <person name="Cronin A."/>
            <person name="Doggett J."/>
            <person name="Dowd L."/>
            <person name="Feltwell T."/>
            <person name="Hance Z."/>
            <person name="Harris B."/>
            <person name="Hauser H."/>
            <person name="Holroyd S."/>
            <person name="Jagels K."/>
            <person name="James K.D."/>
            <person name="Lennard N."/>
            <person name="Line A."/>
            <person name="Mayes R."/>
            <person name="Moule S."/>
            <person name="Mungall K."/>
            <person name="Ormond D."/>
            <person name="Quail M.A."/>
            <person name="Rabbinowitsch E."/>
            <person name="Rutherford K.M."/>
            <person name="Sanders M."/>
            <person name="Sharp S."/>
            <person name="Simmonds M."/>
            <person name="Stevens K."/>
            <person name="Whitehead S."/>
            <person name="Barrell B.G."/>
            <person name="Spratt B.G."/>
            <person name="Parkhill J."/>
        </authorList>
    </citation>
    <scope>NUCLEOTIDE SEQUENCE [LARGE SCALE GENOMIC DNA]</scope>
    <source>
        <strain>MSSA476</strain>
    </source>
</reference>
<evidence type="ECO:0000255" key="1">
    <source>
        <dbReference type="HAMAP-Rule" id="MF_00036"/>
    </source>
</evidence>